<sequence>MWYLLLPTALLLTVSSGVGAGLQKAVVNLDPEWVRVLEEDCVILRCQGTFSPEDNSTKWFHNKSLISHQDANYVIQSARVKDSGMYRCQTAFSALSDPVQLDVHADWLLLQTTKRLFQEGDPIRLRCHSWRNTPVFKVTYLQNGKGKKYFHRNSELSISKATHADSGSYFCRGIIGRNNISSASLQISIGDPTSPSSFLPWHQITFCLLIGLLFAIDTVLYFSVQRSLQSSVAVYEEPKLHWSKEPQDK</sequence>
<comment type="function">
    <text evidence="1 6">Receptor for the invariable Fc fragment of immunoglobulin gamma (IgG). Binds with intermediate affinity to both IgG2a and IgG2b. Can bind to IgG2a and IgG2b monomers. Does not display binding to IgG1 or IgG3 (By similarity). Recognizes neutralizing virus-specific IgGs displayed on the cell surface of infected cells and triggers antibody-dependent cellular cytotoxicity (ADCC). Confers protection to lethal influenza virus infection (By similarity). On splenic dendritic cells, uptakes antigen immune complexes and efficiently divert them into MHC class I and II antigen presentation pathways to provide for superior priming of CD4-positive and CD8-positive T cell immune responses (By similarity). Mediates neutrophil activation by IgG complexes redundantly with FCGR2A (By similarity). Plays a role in promoting bone resorption by enhancing osteoclast differentiation following binding to IgG2a (By similarity). Also acts as a receptor for the Fc region of immunoglobulin epsilon (IgE). Binds with low affinity to both the a and b allotypes of IgE. Has also been shown to bind to IgE allotype a only but not to allotype b. Binds aggregated IgE but not the monomeric form and bound monomeric IgG is readily displaced by IgE complexes. Binding to IgE promotes macrophage-mediated phagocytosis, antigen presentation to T cells, production of pro-inflammatory cytokines and the late phase of cutaneous allergic reactions (By similarity). Mediates enhanced ADCC in response to afucosylated IgGs (PubMed:34485821).</text>
</comment>
<comment type="subunit">
    <text evidence="1">Forms a heterooligomeric complex with ITAM-containing signaling subunits FCER1G. Interacts (via transmembrane domain) with signaling subunits; this interaction is a prerequisite for receptor complex expression on the cell surface and intracellular signal transduction. Binds the Fc region of antigen-complexed IgG.</text>
</comment>
<comment type="subcellular location">
    <subcellularLocation>
        <location evidence="1">Cell membrane</location>
        <topology evidence="3">Single-pass type I membrane protein</topology>
    </subcellularLocation>
</comment>
<comment type="PTM">
    <text evidence="1">N-glycosylated.</text>
</comment>
<comment type="PTM">
    <text evidence="1">Phosphorylated following receptor ligation.</text>
</comment>
<keyword id="KW-1003">Cell membrane</keyword>
<keyword id="KW-1015">Disulfide bond</keyword>
<keyword id="KW-0325">Glycoprotein</keyword>
<keyword id="KW-0389">IgE-binding protein</keyword>
<keyword id="KW-0390">IgG-binding protein</keyword>
<keyword id="KW-0391">Immunity</keyword>
<keyword id="KW-0393">Immunoglobulin domain</keyword>
<keyword id="KW-0472">Membrane</keyword>
<keyword id="KW-0597">Phosphoprotein</keyword>
<keyword id="KW-0675">Receptor</keyword>
<keyword id="KW-1185">Reference proteome</keyword>
<keyword id="KW-0732">Signal</keyword>
<keyword id="KW-0812">Transmembrane</keyword>
<keyword id="KW-1133">Transmembrane helix</keyword>
<dbReference type="EMBL" id="AY219230">
    <property type="protein sequence ID" value="AAP44530.1"/>
    <property type="molecule type" value="mRNA"/>
</dbReference>
<dbReference type="EMBL" id="AC111734">
    <property type="status" value="NOT_ANNOTATED_CDS"/>
    <property type="molecule type" value="Genomic_DNA"/>
</dbReference>
<dbReference type="EMBL" id="CH473958">
    <property type="protein sequence ID" value="EDM09232.1"/>
    <property type="molecule type" value="Genomic_DNA"/>
</dbReference>
<dbReference type="RefSeq" id="NP_997486.1">
    <property type="nucleotide sequence ID" value="NM_207603.1"/>
</dbReference>
<dbReference type="RefSeq" id="XP_008767961.1">
    <property type="nucleotide sequence ID" value="XM_008769739.2"/>
</dbReference>
<dbReference type="SMR" id="Q6XPU4"/>
<dbReference type="FunCoup" id="Q6XPU4">
    <property type="interactions" value="281"/>
</dbReference>
<dbReference type="STRING" id="10116.ENSRNOP00000043183"/>
<dbReference type="GlyCosmos" id="Q6XPU4">
    <property type="glycosylation" value="3 sites, No reported glycans"/>
</dbReference>
<dbReference type="GlyGen" id="Q6XPU4">
    <property type="glycosylation" value="3 sites"/>
</dbReference>
<dbReference type="PhosphoSitePlus" id="Q6XPU4"/>
<dbReference type="PaxDb" id="10116-ENSRNOP00000043183"/>
<dbReference type="GeneID" id="304966"/>
<dbReference type="KEGG" id="rno:304966"/>
<dbReference type="AGR" id="RGD:1303067"/>
<dbReference type="CTD" id="2214"/>
<dbReference type="RGD" id="1303067">
    <property type="gene designation" value="Fcgr3a"/>
</dbReference>
<dbReference type="eggNOG" id="ENOG502RU1M">
    <property type="taxonomic scope" value="Eukaryota"/>
</dbReference>
<dbReference type="HOGENOM" id="CLU_023383_1_0_1"/>
<dbReference type="InParanoid" id="Q6XPU4"/>
<dbReference type="PhylomeDB" id="Q6XPU4"/>
<dbReference type="Reactome" id="R-RNO-163125">
    <property type="pathway name" value="Post-translational modification: synthesis of GPI-anchored proteins"/>
</dbReference>
<dbReference type="Reactome" id="R-RNO-198933">
    <property type="pathway name" value="Immunoregulatory interactions between a Lymphoid and a non-Lymphoid cell"/>
</dbReference>
<dbReference type="Reactome" id="R-RNO-2029481">
    <property type="pathway name" value="FCGR activation"/>
</dbReference>
<dbReference type="Reactome" id="R-RNO-2029482">
    <property type="pathway name" value="Regulation of actin dynamics for phagocytic cup formation"/>
</dbReference>
<dbReference type="Reactome" id="R-RNO-2029485">
    <property type="pathway name" value="Role of phospholipids in phagocytosis"/>
</dbReference>
<dbReference type="Reactome" id="R-RNO-6798695">
    <property type="pathway name" value="Neutrophil degranulation"/>
</dbReference>
<dbReference type="PRO" id="PR:Q6XPU4"/>
<dbReference type="Proteomes" id="UP000002494">
    <property type="component" value="Chromosome 13"/>
</dbReference>
<dbReference type="Proteomes" id="UP000234681">
    <property type="component" value="Chromosome 13"/>
</dbReference>
<dbReference type="Bgee" id="ENSRNOG00000024382">
    <property type="expression patterns" value="Expressed in spleen and 19 other cell types or tissues"/>
</dbReference>
<dbReference type="GO" id="GO:0009986">
    <property type="term" value="C:cell surface"/>
    <property type="evidence" value="ECO:0000314"/>
    <property type="project" value="RGD"/>
</dbReference>
<dbReference type="GO" id="GO:0009897">
    <property type="term" value="C:external side of plasma membrane"/>
    <property type="evidence" value="ECO:0000266"/>
    <property type="project" value="RGD"/>
</dbReference>
<dbReference type="GO" id="GO:0005615">
    <property type="term" value="C:extracellular space"/>
    <property type="evidence" value="ECO:0000266"/>
    <property type="project" value="RGD"/>
</dbReference>
<dbReference type="GO" id="GO:0033001">
    <property type="term" value="C:Fc-gamma receptor III complex"/>
    <property type="evidence" value="ECO:0000266"/>
    <property type="project" value="RGD"/>
</dbReference>
<dbReference type="GO" id="GO:0005886">
    <property type="term" value="C:plasma membrane"/>
    <property type="evidence" value="ECO:0000266"/>
    <property type="project" value="RGD"/>
</dbReference>
<dbReference type="GO" id="GO:0019863">
    <property type="term" value="F:IgE binding"/>
    <property type="evidence" value="ECO:0007669"/>
    <property type="project" value="UniProtKB-KW"/>
</dbReference>
<dbReference type="GO" id="GO:0019767">
    <property type="term" value="F:IgE receptor activity"/>
    <property type="evidence" value="ECO:0000266"/>
    <property type="project" value="RGD"/>
</dbReference>
<dbReference type="GO" id="GO:0019864">
    <property type="term" value="F:IgG binding"/>
    <property type="evidence" value="ECO:0007669"/>
    <property type="project" value="UniProtKB-KW"/>
</dbReference>
<dbReference type="GO" id="GO:0019770">
    <property type="term" value="F:IgG receptor activity"/>
    <property type="evidence" value="ECO:0000266"/>
    <property type="project" value="RGD"/>
</dbReference>
<dbReference type="GO" id="GO:0140375">
    <property type="term" value="F:immune receptor activity"/>
    <property type="evidence" value="ECO:0000266"/>
    <property type="project" value="RGD"/>
</dbReference>
<dbReference type="GO" id="GO:0019772">
    <property type="term" value="F:low-affinity IgG receptor activity"/>
    <property type="evidence" value="ECO:0000266"/>
    <property type="project" value="RGD"/>
</dbReference>
<dbReference type="GO" id="GO:0001788">
    <property type="term" value="P:antibody-dependent cellular cytotoxicity"/>
    <property type="evidence" value="ECO:0000266"/>
    <property type="project" value="RGD"/>
</dbReference>
<dbReference type="GO" id="GO:0019722">
    <property type="term" value="P:calcium-mediated signaling"/>
    <property type="evidence" value="ECO:0000266"/>
    <property type="project" value="RGD"/>
</dbReference>
<dbReference type="GO" id="GO:0007166">
    <property type="term" value="P:cell surface receptor signaling pathway"/>
    <property type="evidence" value="ECO:0000318"/>
    <property type="project" value="GO_Central"/>
</dbReference>
<dbReference type="GO" id="GO:0071222">
    <property type="term" value="P:cellular response to lipopolysaccharide"/>
    <property type="evidence" value="ECO:0000314"/>
    <property type="project" value="RGD"/>
</dbReference>
<dbReference type="GO" id="GO:0002468">
    <property type="term" value="P:dendritic cell antigen processing and presentation"/>
    <property type="evidence" value="ECO:0000266"/>
    <property type="project" value="RGD"/>
</dbReference>
<dbReference type="GO" id="GO:0160006">
    <property type="term" value="P:Fc receptor-mediated immune complex endocytosis"/>
    <property type="evidence" value="ECO:0000266"/>
    <property type="project" value="RGD"/>
</dbReference>
<dbReference type="GO" id="GO:0038094">
    <property type="term" value="P:Fc-gamma receptor signaling pathway"/>
    <property type="evidence" value="ECO:0000266"/>
    <property type="project" value="RGD"/>
</dbReference>
<dbReference type="GO" id="GO:0042116">
    <property type="term" value="P:macrophage activation"/>
    <property type="evidence" value="ECO:0000266"/>
    <property type="project" value="RGD"/>
</dbReference>
<dbReference type="GO" id="GO:0030101">
    <property type="term" value="P:natural killer cell activation"/>
    <property type="evidence" value="ECO:0000266"/>
    <property type="project" value="RGD"/>
</dbReference>
<dbReference type="GO" id="GO:0043320">
    <property type="term" value="P:natural killer cell degranulation"/>
    <property type="evidence" value="ECO:0000266"/>
    <property type="project" value="RGD"/>
</dbReference>
<dbReference type="GO" id="GO:0042267">
    <property type="term" value="P:natural killer cell mediated cytotoxicity"/>
    <property type="evidence" value="ECO:0000266"/>
    <property type="project" value="RGD"/>
</dbReference>
<dbReference type="GO" id="GO:0042119">
    <property type="term" value="P:neutrophil activation"/>
    <property type="evidence" value="ECO:0000266"/>
    <property type="project" value="RGD"/>
</dbReference>
<dbReference type="GO" id="GO:0043491">
    <property type="term" value="P:phosphatidylinositol 3-kinase/protein kinase B signal transduction"/>
    <property type="evidence" value="ECO:0000266"/>
    <property type="project" value="RGD"/>
</dbReference>
<dbReference type="GO" id="GO:0045780">
    <property type="term" value="P:positive regulation of bone resorption"/>
    <property type="evidence" value="ECO:0000266"/>
    <property type="project" value="RGD"/>
</dbReference>
<dbReference type="GO" id="GO:0032819">
    <property type="term" value="P:positive regulation of natural killer cell proliferation"/>
    <property type="evidence" value="ECO:0000266"/>
    <property type="project" value="RGD"/>
</dbReference>
<dbReference type="GO" id="GO:0032760">
    <property type="term" value="P:positive regulation of tumor necrosis factor production"/>
    <property type="evidence" value="ECO:0000266"/>
    <property type="project" value="RGD"/>
</dbReference>
<dbReference type="CDD" id="cd05752">
    <property type="entry name" value="Ig1_FcgammaR_like"/>
    <property type="match status" value="1"/>
</dbReference>
<dbReference type="CDD" id="cd05753">
    <property type="entry name" value="Ig2_FcgammaR_like"/>
    <property type="match status" value="1"/>
</dbReference>
<dbReference type="FunFam" id="2.60.40.10:FF:000217">
    <property type="entry name" value="High affinity immunoglobulin gamma Fc receptor I"/>
    <property type="match status" value="1"/>
</dbReference>
<dbReference type="FunFam" id="2.60.40.10:FF:000356">
    <property type="entry name" value="Low affinity immunoglobulin gamma Fc region receptor III-A"/>
    <property type="match status" value="1"/>
</dbReference>
<dbReference type="Gene3D" id="2.60.40.10">
    <property type="entry name" value="Immunoglobulins"/>
    <property type="match status" value="2"/>
</dbReference>
<dbReference type="InterPro" id="IPR007110">
    <property type="entry name" value="Ig-like_dom"/>
</dbReference>
<dbReference type="InterPro" id="IPR036179">
    <property type="entry name" value="Ig-like_dom_sf"/>
</dbReference>
<dbReference type="InterPro" id="IPR013783">
    <property type="entry name" value="Ig-like_fold"/>
</dbReference>
<dbReference type="InterPro" id="IPR050488">
    <property type="entry name" value="Ig_Fc_receptor"/>
</dbReference>
<dbReference type="InterPro" id="IPR003599">
    <property type="entry name" value="Ig_sub"/>
</dbReference>
<dbReference type="InterPro" id="IPR003598">
    <property type="entry name" value="Ig_sub2"/>
</dbReference>
<dbReference type="PANTHER" id="PTHR11481">
    <property type="entry name" value="IMMUNOGLOBULIN FC RECEPTOR"/>
    <property type="match status" value="1"/>
</dbReference>
<dbReference type="PANTHER" id="PTHR11481:SF103">
    <property type="entry name" value="LOW AFFINITY IMMUNOGLOBULIN GAMMA FC REGION RECEPTOR III-A-RELATED"/>
    <property type="match status" value="1"/>
</dbReference>
<dbReference type="Pfam" id="PF13895">
    <property type="entry name" value="Ig_2"/>
    <property type="match status" value="2"/>
</dbReference>
<dbReference type="SMART" id="SM00409">
    <property type="entry name" value="IG"/>
    <property type="match status" value="2"/>
</dbReference>
<dbReference type="SMART" id="SM00408">
    <property type="entry name" value="IGc2"/>
    <property type="match status" value="2"/>
</dbReference>
<dbReference type="SUPFAM" id="SSF48726">
    <property type="entry name" value="Immunoglobulin"/>
    <property type="match status" value="2"/>
</dbReference>
<dbReference type="PROSITE" id="PS50835">
    <property type="entry name" value="IG_LIKE"/>
    <property type="match status" value="2"/>
</dbReference>
<evidence type="ECO:0000250" key="1">
    <source>
        <dbReference type="UniProtKB" id="A0A0B4J1G0"/>
    </source>
</evidence>
<evidence type="ECO:0000250" key="2">
    <source>
        <dbReference type="UniProtKB" id="P08637"/>
    </source>
</evidence>
<evidence type="ECO:0000255" key="3"/>
<evidence type="ECO:0000255" key="4">
    <source>
        <dbReference type="PROSITE-ProRule" id="PRU00114"/>
    </source>
</evidence>
<evidence type="ECO:0000255" key="5">
    <source>
        <dbReference type="PROSITE-ProRule" id="PRU00498"/>
    </source>
</evidence>
<evidence type="ECO:0000269" key="6">
    <source>
    </source>
</evidence>
<evidence type="ECO:0000305" key="7"/>
<evidence type="ECO:0000312" key="8">
    <source>
        <dbReference type="RGD" id="1303067"/>
    </source>
</evidence>
<name>FCG3A_RAT</name>
<reference key="1">
    <citation type="submission" date="2003-01" db="EMBL/GenBank/DDBJ databases">
        <title>Identification of a novel rat receptor homologous to human FcgammaRIII-A.</title>
        <authorList>
            <person name="Teusner J.T."/>
            <person name="Belford D.A."/>
            <person name="Powell B.C."/>
        </authorList>
    </citation>
    <scope>NUCLEOTIDE SEQUENCE [MRNA]</scope>
</reference>
<reference key="2">
    <citation type="journal article" date="2004" name="Nature">
        <title>Genome sequence of the Brown Norway rat yields insights into mammalian evolution.</title>
        <authorList>
            <person name="Gibbs R.A."/>
            <person name="Weinstock G.M."/>
            <person name="Metzker M.L."/>
            <person name="Muzny D.M."/>
            <person name="Sodergren E.J."/>
            <person name="Scherer S."/>
            <person name="Scott G."/>
            <person name="Steffen D."/>
            <person name="Worley K.C."/>
            <person name="Burch P.E."/>
            <person name="Okwuonu G."/>
            <person name="Hines S."/>
            <person name="Lewis L."/>
            <person name="Deramo C."/>
            <person name="Delgado O."/>
            <person name="Dugan-Rocha S."/>
            <person name="Miner G."/>
            <person name="Morgan M."/>
            <person name="Hawes A."/>
            <person name="Gill R."/>
            <person name="Holt R.A."/>
            <person name="Adams M.D."/>
            <person name="Amanatides P.G."/>
            <person name="Baden-Tillson H."/>
            <person name="Barnstead M."/>
            <person name="Chin S."/>
            <person name="Evans C.A."/>
            <person name="Ferriera S."/>
            <person name="Fosler C."/>
            <person name="Glodek A."/>
            <person name="Gu Z."/>
            <person name="Jennings D."/>
            <person name="Kraft C.L."/>
            <person name="Nguyen T."/>
            <person name="Pfannkoch C.M."/>
            <person name="Sitter C."/>
            <person name="Sutton G.G."/>
            <person name="Venter J.C."/>
            <person name="Woodage T."/>
            <person name="Smith D."/>
            <person name="Lee H.-M."/>
            <person name="Gustafson E."/>
            <person name="Cahill P."/>
            <person name="Kana A."/>
            <person name="Doucette-Stamm L."/>
            <person name="Weinstock K."/>
            <person name="Fechtel K."/>
            <person name="Weiss R.B."/>
            <person name="Dunn D.M."/>
            <person name="Green E.D."/>
            <person name="Blakesley R.W."/>
            <person name="Bouffard G.G."/>
            <person name="De Jong P.J."/>
            <person name="Osoegawa K."/>
            <person name="Zhu B."/>
            <person name="Marra M."/>
            <person name="Schein J."/>
            <person name="Bosdet I."/>
            <person name="Fjell C."/>
            <person name="Jones S."/>
            <person name="Krzywinski M."/>
            <person name="Mathewson C."/>
            <person name="Siddiqui A."/>
            <person name="Wye N."/>
            <person name="McPherson J."/>
            <person name="Zhao S."/>
            <person name="Fraser C.M."/>
            <person name="Shetty J."/>
            <person name="Shatsman S."/>
            <person name="Geer K."/>
            <person name="Chen Y."/>
            <person name="Abramzon S."/>
            <person name="Nierman W.C."/>
            <person name="Havlak P.H."/>
            <person name="Chen R."/>
            <person name="Durbin K.J."/>
            <person name="Egan A."/>
            <person name="Ren Y."/>
            <person name="Song X.-Z."/>
            <person name="Li B."/>
            <person name="Liu Y."/>
            <person name="Qin X."/>
            <person name="Cawley S."/>
            <person name="Cooney A.J."/>
            <person name="D'Souza L.M."/>
            <person name="Martin K."/>
            <person name="Wu J.Q."/>
            <person name="Gonzalez-Garay M.L."/>
            <person name="Jackson A.R."/>
            <person name="Kalafus K.J."/>
            <person name="McLeod M.P."/>
            <person name="Milosavljevic A."/>
            <person name="Virk D."/>
            <person name="Volkov A."/>
            <person name="Wheeler D.A."/>
            <person name="Zhang Z."/>
            <person name="Bailey J.A."/>
            <person name="Eichler E.E."/>
            <person name="Tuzun E."/>
            <person name="Birney E."/>
            <person name="Mongin E."/>
            <person name="Ureta-Vidal A."/>
            <person name="Woodwark C."/>
            <person name="Zdobnov E."/>
            <person name="Bork P."/>
            <person name="Suyama M."/>
            <person name="Torrents D."/>
            <person name="Alexandersson M."/>
            <person name="Trask B.J."/>
            <person name="Young J.M."/>
            <person name="Huang H."/>
            <person name="Wang H."/>
            <person name="Xing H."/>
            <person name="Daniels S."/>
            <person name="Gietzen D."/>
            <person name="Schmidt J."/>
            <person name="Stevens K."/>
            <person name="Vitt U."/>
            <person name="Wingrove J."/>
            <person name="Camara F."/>
            <person name="Mar Alba M."/>
            <person name="Abril J.F."/>
            <person name="Guigo R."/>
            <person name="Smit A."/>
            <person name="Dubchak I."/>
            <person name="Rubin E.M."/>
            <person name="Couronne O."/>
            <person name="Poliakov A."/>
            <person name="Huebner N."/>
            <person name="Ganten D."/>
            <person name="Goesele C."/>
            <person name="Hummel O."/>
            <person name="Kreitler T."/>
            <person name="Lee Y.-A."/>
            <person name="Monti J."/>
            <person name="Schulz H."/>
            <person name="Zimdahl H."/>
            <person name="Himmelbauer H."/>
            <person name="Lehrach H."/>
            <person name="Jacob H.J."/>
            <person name="Bromberg S."/>
            <person name="Gullings-Handley J."/>
            <person name="Jensen-Seaman M.I."/>
            <person name="Kwitek A.E."/>
            <person name="Lazar J."/>
            <person name="Pasko D."/>
            <person name="Tonellato P.J."/>
            <person name="Twigger S."/>
            <person name="Ponting C.P."/>
            <person name="Duarte J.M."/>
            <person name="Rice S."/>
            <person name="Goodstadt L."/>
            <person name="Beatson S.A."/>
            <person name="Emes R.D."/>
            <person name="Winter E.E."/>
            <person name="Webber C."/>
            <person name="Brandt P."/>
            <person name="Nyakatura G."/>
            <person name="Adetobi M."/>
            <person name="Chiaromonte F."/>
            <person name="Elnitski L."/>
            <person name="Eswara P."/>
            <person name="Hardison R.C."/>
            <person name="Hou M."/>
            <person name="Kolbe D."/>
            <person name="Makova K."/>
            <person name="Miller W."/>
            <person name="Nekrutenko A."/>
            <person name="Riemer C."/>
            <person name="Schwartz S."/>
            <person name="Taylor J."/>
            <person name="Yang S."/>
            <person name="Zhang Y."/>
            <person name="Lindpaintner K."/>
            <person name="Andrews T.D."/>
            <person name="Caccamo M."/>
            <person name="Clamp M."/>
            <person name="Clarke L."/>
            <person name="Curwen V."/>
            <person name="Durbin R.M."/>
            <person name="Eyras E."/>
            <person name="Searle S.M."/>
            <person name="Cooper G.M."/>
            <person name="Batzoglou S."/>
            <person name="Brudno M."/>
            <person name="Sidow A."/>
            <person name="Stone E.A."/>
            <person name="Payseur B.A."/>
            <person name="Bourque G."/>
            <person name="Lopez-Otin C."/>
            <person name="Puente X.S."/>
            <person name="Chakrabarti K."/>
            <person name="Chatterji S."/>
            <person name="Dewey C."/>
            <person name="Pachter L."/>
            <person name="Bray N."/>
            <person name="Yap V.B."/>
            <person name="Caspi A."/>
            <person name="Tesler G."/>
            <person name="Pevzner P.A."/>
            <person name="Haussler D."/>
            <person name="Roskin K.M."/>
            <person name="Baertsch R."/>
            <person name="Clawson H."/>
            <person name="Furey T.S."/>
            <person name="Hinrichs A.S."/>
            <person name="Karolchik D."/>
            <person name="Kent W.J."/>
            <person name="Rosenbloom K.R."/>
            <person name="Trumbower H."/>
            <person name="Weirauch M."/>
            <person name="Cooper D.N."/>
            <person name="Stenson P.D."/>
            <person name="Ma B."/>
            <person name="Brent M."/>
            <person name="Arumugam M."/>
            <person name="Shteynberg D."/>
            <person name="Copley R.R."/>
            <person name="Taylor M.S."/>
            <person name="Riethman H."/>
            <person name="Mudunuri U."/>
            <person name="Peterson J."/>
            <person name="Guyer M."/>
            <person name="Felsenfeld A."/>
            <person name="Old S."/>
            <person name="Mockrin S."/>
            <person name="Collins F.S."/>
        </authorList>
    </citation>
    <scope>NUCLEOTIDE SEQUENCE [LARGE SCALE GENOMIC DNA]</scope>
    <source>
        <strain>Brown Norway</strain>
    </source>
</reference>
<reference key="3">
    <citation type="submission" date="2005-09" db="EMBL/GenBank/DDBJ databases">
        <authorList>
            <person name="Mural R.J."/>
            <person name="Li P.W."/>
            <person name="Adams M.D."/>
            <person name="Amanatides P.G."/>
            <person name="Baden-Tillson H."/>
            <person name="Barnstead M."/>
            <person name="Chin S.H."/>
            <person name="Dew I."/>
            <person name="Evans C.A."/>
            <person name="Ferriera S."/>
            <person name="Flanigan M."/>
            <person name="Fosler C."/>
            <person name="Glodek A."/>
            <person name="Gu Z."/>
            <person name="Holt R.A."/>
            <person name="Jennings D."/>
            <person name="Kraft C.L."/>
            <person name="Lu F."/>
            <person name="Nguyen T."/>
            <person name="Nusskern D.R."/>
            <person name="Pfannkoch C.M."/>
            <person name="Sitter C."/>
            <person name="Sutton G.G."/>
            <person name="Venter J.C."/>
            <person name="Wang Z."/>
            <person name="Woodage T."/>
            <person name="Zheng X.H."/>
            <person name="Zhong F."/>
        </authorList>
    </citation>
    <scope>NUCLEOTIDE SEQUENCE [LARGE SCALE GENOMIC DNA]</scope>
    <source>
        <strain>Brown Norway</strain>
    </source>
</reference>
<reference key="4">
    <citation type="journal article" date="1994" name="Bull. World Health Organ.">
        <title>Nomenclature of Fc receptors. IUIS/WHO Subcommittee on Nomenclature of Fc receptors.</title>
        <authorList>
            <person name="Conrad D."/>
            <person name="Cooper M."/>
            <person name="Fridman W.H."/>
            <person name="Kinet J.P."/>
            <person name="Ravetch J."/>
        </authorList>
    </citation>
    <scope>NOMENCLATURE</scope>
</reference>
<reference key="5">
    <citation type="journal article" date="2021" name="Antib Ther">
        <title>Cross-species higher sensitivities of FcgammaRIIIA/FcgammaRIV to afucosylated IgG for enhanced ADCC.</title>
        <authorList>
            <person name="Mao C."/>
            <person name="Near R."/>
            <person name="Zhong X."/>
            <person name="Gao W."/>
        </authorList>
    </citation>
    <scope>FUNCTION</scope>
</reference>
<organism>
    <name type="scientific">Rattus norvegicus</name>
    <name type="common">Rat</name>
    <dbReference type="NCBI Taxonomy" id="10116"/>
    <lineage>
        <taxon>Eukaryota</taxon>
        <taxon>Metazoa</taxon>
        <taxon>Chordata</taxon>
        <taxon>Craniata</taxon>
        <taxon>Vertebrata</taxon>
        <taxon>Euteleostomi</taxon>
        <taxon>Mammalia</taxon>
        <taxon>Eutheria</taxon>
        <taxon>Euarchontoglires</taxon>
        <taxon>Glires</taxon>
        <taxon>Rodentia</taxon>
        <taxon>Myomorpha</taxon>
        <taxon>Muroidea</taxon>
        <taxon>Muridae</taxon>
        <taxon>Murinae</taxon>
        <taxon>Rattus</taxon>
    </lineage>
</organism>
<gene>
    <name evidence="8" type="primary">Fcgr3a</name>
    <name type="synonym">Fcgr4</name>
</gene>
<feature type="signal peptide" evidence="3">
    <location>
        <begin position="1"/>
        <end position="20"/>
    </location>
</feature>
<feature type="chain" id="PRO_5014221341" description="Low affinity immunoglobulin gamma Fc region receptor III-A" evidence="3">
    <location>
        <begin position="21"/>
        <end position="249"/>
    </location>
</feature>
<feature type="topological domain" description="Extracellular" evidence="7">
    <location>
        <begin position="21"/>
        <end position="203"/>
    </location>
</feature>
<feature type="transmembrane region" description="Helical" evidence="3">
    <location>
        <begin position="204"/>
        <end position="224"/>
    </location>
</feature>
<feature type="topological domain" description="Cytoplasmic" evidence="7">
    <location>
        <begin position="225"/>
        <end position="249"/>
    </location>
</feature>
<feature type="domain" description="Ig-like C2-type 1" evidence="4">
    <location>
        <begin position="31"/>
        <end position="103"/>
    </location>
</feature>
<feature type="domain" description="Ig-like C2-type 2" evidence="4">
    <location>
        <begin position="117"/>
        <end position="188"/>
    </location>
</feature>
<feature type="site" description="Important for receptor turnover" evidence="2">
    <location>
        <position position="217"/>
    </location>
</feature>
<feature type="modified residue" description="Phosphotyrosine" evidence="1">
    <location>
        <position position="235"/>
    </location>
</feature>
<feature type="glycosylation site" description="N-linked (GlcNAc...) asparagine" evidence="5">
    <location>
        <position position="55"/>
    </location>
</feature>
<feature type="glycosylation site" description="N-linked (GlcNAc...) asparagine" evidence="5">
    <location>
        <position position="62"/>
    </location>
</feature>
<feature type="glycosylation site" description="N-linked (GlcNAc...) asparagine" evidence="5">
    <location>
        <position position="179"/>
    </location>
</feature>
<feature type="disulfide bond" evidence="4">
    <location>
        <begin position="46"/>
        <end position="88"/>
    </location>
</feature>
<feature type="disulfide bond" evidence="4">
    <location>
        <begin position="127"/>
        <end position="171"/>
    </location>
</feature>
<feature type="sequence conflict" description="In Ref. 2; AC111734 and 3; EDM09232." evidence="7" ref="2 3">
    <original>N</original>
    <variation>I</variation>
    <location>
        <position position="28"/>
    </location>
</feature>
<protein>
    <recommendedName>
        <fullName evidence="2">Low affinity immunoglobulin gamma Fc region receptor III-A</fullName>
        <shortName>IgG Fc receptor III-A</shortName>
    </recommendedName>
    <alternativeName>
        <fullName evidence="1">CD16-2</fullName>
    </alternativeName>
    <alternativeName>
        <fullName evidence="1">FcgammaRIV</fullName>
    </alternativeName>
    <cdAntigenName>CD16a</cdAntigenName>
</protein>
<accession>Q6XPU4</accession>
<accession>A0A0B4J2J1</accession>
<proteinExistence type="evidence at transcript level"/>